<sequence length="125" mass="14721">MNFSRERTITEIQNDYKEQVERQNQLKKRRRKGLYRRLTVFGALVFLTAIVLASSVWSQTSSLSAKEEKKEQLEKELKSLKTKQTDLKEEISKLKDEDYVTELARRDLFMSGDGEIIFNVEKKSK</sequence>
<feature type="chain" id="PRO_0000079922" description="Cell division protein DivIC">
    <location>
        <begin position="1"/>
        <end position="125"/>
    </location>
</feature>
<organism>
    <name type="scientific">Bacillus subtilis (strain 168)</name>
    <dbReference type="NCBI Taxonomy" id="224308"/>
    <lineage>
        <taxon>Bacteria</taxon>
        <taxon>Bacillati</taxon>
        <taxon>Bacillota</taxon>
        <taxon>Bacilli</taxon>
        <taxon>Bacillales</taxon>
        <taxon>Bacillaceae</taxon>
        <taxon>Bacillus</taxon>
    </lineage>
</organism>
<keyword id="KW-1185">Reference proteome</keyword>
<reference key="1">
    <citation type="journal article" date="1994" name="J. Bacteriol.">
        <title>Characterization of a cell division gene from Bacillus subtilis that is required for vegetative and sporulation septum formation.</title>
        <authorList>
            <person name="Levin P.A."/>
            <person name="Losick R."/>
        </authorList>
    </citation>
    <scope>NUCLEOTIDE SEQUENCE [GENOMIC DNA]</scope>
    <source>
        <strain>168</strain>
    </source>
</reference>
<reference key="2">
    <citation type="journal article" date="1994" name="DNA Res.">
        <title>Systematic sequencing of the 180 kilobase region of the Bacillus subtilis chromosome containing the replication origin.</title>
        <authorList>
            <person name="Ogasawara N."/>
            <person name="Nakai S."/>
            <person name="Yoshikawa H."/>
        </authorList>
    </citation>
    <scope>NUCLEOTIDE SEQUENCE [GENOMIC DNA]</scope>
    <source>
        <strain>168</strain>
    </source>
</reference>
<reference key="3">
    <citation type="journal article" date="1997" name="Nature">
        <title>The complete genome sequence of the Gram-positive bacterium Bacillus subtilis.</title>
        <authorList>
            <person name="Kunst F."/>
            <person name="Ogasawara N."/>
            <person name="Moszer I."/>
            <person name="Albertini A.M."/>
            <person name="Alloni G."/>
            <person name="Azevedo V."/>
            <person name="Bertero M.G."/>
            <person name="Bessieres P."/>
            <person name="Bolotin A."/>
            <person name="Borchert S."/>
            <person name="Borriss R."/>
            <person name="Boursier L."/>
            <person name="Brans A."/>
            <person name="Braun M."/>
            <person name="Brignell S.C."/>
            <person name="Bron S."/>
            <person name="Brouillet S."/>
            <person name="Bruschi C.V."/>
            <person name="Caldwell B."/>
            <person name="Capuano V."/>
            <person name="Carter N.M."/>
            <person name="Choi S.-K."/>
            <person name="Codani J.-J."/>
            <person name="Connerton I.F."/>
            <person name="Cummings N.J."/>
            <person name="Daniel R.A."/>
            <person name="Denizot F."/>
            <person name="Devine K.M."/>
            <person name="Duesterhoeft A."/>
            <person name="Ehrlich S.D."/>
            <person name="Emmerson P.T."/>
            <person name="Entian K.-D."/>
            <person name="Errington J."/>
            <person name="Fabret C."/>
            <person name="Ferrari E."/>
            <person name="Foulger D."/>
            <person name="Fritz C."/>
            <person name="Fujita M."/>
            <person name="Fujita Y."/>
            <person name="Fuma S."/>
            <person name="Galizzi A."/>
            <person name="Galleron N."/>
            <person name="Ghim S.-Y."/>
            <person name="Glaser P."/>
            <person name="Goffeau A."/>
            <person name="Golightly E.J."/>
            <person name="Grandi G."/>
            <person name="Guiseppi G."/>
            <person name="Guy B.J."/>
            <person name="Haga K."/>
            <person name="Haiech J."/>
            <person name="Harwood C.R."/>
            <person name="Henaut A."/>
            <person name="Hilbert H."/>
            <person name="Holsappel S."/>
            <person name="Hosono S."/>
            <person name="Hullo M.-F."/>
            <person name="Itaya M."/>
            <person name="Jones L.-M."/>
            <person name="Joris B."/>
            <person name="Karamata D."/>
            <person name="Kasahara Y."/>
            <person name="Klaerr-Blanchard M."/>
            <person name="Klein C."/>
            <person name="Kobayashi Y."/>
            <person name="Koetter P."/>
            <person name="Koningstein G."/>
            <person name="Krogh S."/>
            <person name="Kumano M."/>
            <person name="Kurita K."/>
            <person name="Lapidus A."/>
            <person name="Lardinois S."/>
            <person name="Lauber J."/>
            <person name="Lazarevic V."/>
            <person name="Lee S.-M."/>
            <person name="Levine A."/>
            <person name="Liu H."/>
            <person name="Masuda S."/>
            <person name="Mauel C."/>
            <person name="Medigue C."/>
            <person name="Medina N."/>
            <person name="Mellado R.P."/>
            <person name="Mizuno M."/>
            <person name="Moestl D."/>
            <person name="Nakai S."/>
            <person name="Noback M."/>
            <person name="Noone D."/>
            <person name="O'Reilly M."/>
            <person name="Ogawa K."/>
            <person name="Ogiwara A."/>
            <person name="Oudega B."/>
            <person name="Park S.-H."/>
            <person name="Parro V."/>
            <person name="Pohl T.M."/>
            <person name="Portetelle D."/>
            <person name="Porwollik S."/>
            <person name="Prescott A.M."/>
            <person name="Presecan E."/>
            <person name="Pujic P."/>
            <person name="Purnelle B."/>
            <person name="Rapoport G."/>
            <person name="Rey M."/>
            <person name="Reynolds S."/>
            <person name="Rieger M."/>
            <person name="Rivolta C."/>
            <person name="Rocha E."/>
            <person name="Roche B."/>
            <person name="Rose M."/>
            <person name="Sadaie Y."/>
            <person name="Sato T."/>
            <person name="Scanlan E."/>
            <person name="Schleich S."/>
            <person name="Schroeter R."/>
            <person name="Scoffone F."/>
            <person name="Sekiguchi J."/>
            <person name="Sekowska A."/>
            <person name="Seror S.J."/>
            <person name="Serror P."/>
            <person name="Shin B.-S."/>
            <person name="Soldo B."/>
            <person name="Sorokin A."/>
            <person name="Tacconi E."/>
            <person name="Takagi T."/>
            <person name="Takahashi H."/>
            <person name="Takemaru K."/>
            <person name="Takeuchi M."/>
            <person name="Tamakoshi A."/>
            <person name="Tanaka T."/>
            <person name="Terpstra P."/>
            <person name="Tognoni A."/>
            <person name="Tosato V."/>
            <person name="Uchiyama S."/>
            <person name="Vandenbol M."/>
            <person name="Vannier F."/>
            <person name="Vassarotti A."/>
            <person name="Viari A."/>
            <person name="Wambutt R."/>
            <person name="Wedler E."/>
            <person name="Wedler H."/>
            <person name="Weitzenegger T."/>
            <person name="Winters P."/>
            <person name="Wipat A."/>
            <person name="Yamamoto H."/>
            <person name="Yamane K."/>
            <person name="Yasumoto K."/>
            <person name="Yata K."/>
            <person name="Yoshida K."/>
            <person name="Yoshikawa H.-F."/>
            <person name="Zumstein E."/>
            <person name="Yoshikawa H."/>
            <person name="Danchin A."/>
        </authorList>
    </citation>
    <scope>NUCLEOTIDE SEQUENCE [LARGE SCALE GENOMIC DNA]</scope>
    <source>
        <strain>168</strain>
    </source>
</reference>
<protein>
    <recommendedName>
        <fullName>Cell division protein DivIC</fullName>
    </recommendedName>
</protein>
<comment type="function">
    <text>Required for vegetative and sporulation septum formation. Required for the activation of genes expressed under the control of the sporulation transcription factors sigma F and sigma E.</text>
</comment>
<comment type="interaction">
    <interactant intactId="EBI-5243468">
        <id>P37471</id>
    </interactant>
    <interactant intactId="EBI-5245735">
        <id>Q07867</id>
        <label>ftsL</label>
    </interactant>
    <organismsDiffer>false</organismsDiffer>
    <experiments>4</experiments>
</comment>
<gene>
    <name type="primary">divIC</name>
    <name type="synonym">divA</name>
    <name type="ordered locus">BSU00620</name>
</gene>
<accession>P37471</accession>
<dbReference type="EMBL" id="L23497">
    <property type="protein sequence ID" value="AAB38379.1"/>
    <property type="molecule type" value="Genomic_DNA"/>
</dbReference>
<dbReference type="EMBL" id="D26185">
    <property type="protein sequence ID" value="BAA05297.1"/>
    <property type="molecule type" value="Genomic_DNA"/>
</dbReference>
<dbReference type="EMBL" id="AL009126">
    <property type="protein sequence ID" value="CAB11838.1"/>
    <property type="molecule type" value="Genomic_DNA"/>
</dbReference>
<dbReference type="PIR" id="B53380">
    <property type="entry name" value="B53380"/>
</dbReference>
<dbReference type="RefSeq" id="NP_387943.1">
    <property type="nucleotide sequence ID" value="NC_000964.3"/>
</dbReference>
<dbReference type="RefSeq" id="WP_003243211.1">
    <property type="nucleotide sequence ID" value="NZ_OZ025638.1"/>
</dbReference>
<dbReference type="SMR" id="P37471"/>
<dbReference type="FunCoup" id="P37471">
    <property type="interactions" value="17"/>
</dbReference>
<dbReference type="IntAct" id="P37471">
    <property type="interactions" value="13"/>
</dbReference>
<dbReference type="STRING" id="224308.BSU00620"/>
<dbReference type="PaxDb" id="224308-BSU00620"/>
<dbReference type="EnsemblBacteria" id="CAB11838">
    <property type="protein sequence ID" value="CAB11838"/>
    <property type="gene ID" value="BSU_00620"/>
</dbReference>
<dbReference type="GeneID" id="936786"/>
<dbReference type="KEGG" id="bsu:BSU00620"/>
<dbReference type="PATRIC" id="fig|224308.179.peg.62"/>
<dbReference type="eggNOG" id="COG2919">
    <property type="taxonomic scope" value="Bacteria"/>
</dbReference>
<dbReference type="InParanoid" id="P37471"/>
<dbReference type="OrthoDB" id="2991180at2"/>
<dbReference type="BioCyc" id="BSUB:BSU00620-MONOMER"/>
<dbReference type="Proteomes" id="UP000001570">
    <property type="component" value="Chromosome"/>
</dbReference>
<dbReference type="GO" id="GO:0051301">
    <property type="term" value="P:cell division"/>
    <property type="evidence" value="ECO:0007669"/>
    <property type="project" value="InterPro"/>
</dbReference>
<dbReference type="InterPro" id="IPR039076">
    <property type="entry name" value="DivIC"/>
</dbReference>
<dbReference type="InterPro" id="IPR007060">
    <property type="entry name" value="FtsL/DivIC"/>
</dbReference>
<dbReference type="PANTHER" id="PTHR40027">
    <property type="entry name" value="CELL DIVISION PROTEIN DIVIC"/>
    <property type="match status" value="1"/>
</dbReference>
<dbReference type="PANTHER" id="PTHR40027:SF1">
    <property type="entry name" value="CELL DIVISION PROTEIN DIVIC"/>
    <property type="match status" value="1"/>
</dbReference>
<dbReference type="Pfam" id="PF04977">
    <property type="entry name" value="DivIC"/>
    <property type="match status" value="1"/>
</dbReference>
<proteinExistence type="evidence at protein level"/>
<name>DIVIC_BACSU</name>